<comment type="function">
    <text evidence="1">Promotes RNA polymerase assembly. Latches the N- and C-terminal regions of the beta' subunit thereby facilitating its interaction with the beta and alpha subunits.</text>
</comment>
<comment type="catalytic activity">
    <reaction evidence="1">
        <text>RNA(n) + a ribonucleoside 5'-triphosphate = RNA(n+1) + diphosphate</text>
        <dbReference type="Rhea" id="RHEA:21248"/>
        <dbReference type="Rhea" id="RHEA-COMP:14527"/>
        <dbReference type="Rhea" id="RHEA-COMP:17342"/>
        <dbReference type="ChEBI" id="CHEBI:33019"/>
        <dbReference type="ChEBI" id="CHEBI:61557"/>
        <dbReference type="ChEBI" id="CHEBI:140395"/>
        <dbReference type="EC" id="2.7.7.6"/>
    </reaction>
</comment>
<comment type="subunit">
    <text evidence="1">The RNAP catalytic core consists of 2 alpha, 1 beta, 1 beta' and 1 omega subunit. When a sigma factor is associated with the core the holoenzyme is formed, which can initiate transcription.</text>
</comment>
<comment type="similarity">
    <text evidence="1">Belongs to the RNA polymerase subunit omega family.</text>
</comment>
<organism>
    <name type="scientific">Escherichia coli (strain SE11)</name>
    <dbReference type="NCBI Taxonomy" id="409438"/>
    <lineage>
        <taxon>Bacteria</taxon>
        <taxon>Pseudomonadati</taxon>
        <taxon>Pseudomonadota</taxon>
        <taxon>Gammaproteobacteria</taxon>
        <taxon>Enterobacterales</taxon>
        <taxon>Enterobacteriaceae</taxon>
        <taxon>Escherichia</taxon>
    </lineage>
</organism>
<evidence type="ECO:0000255" key="1">
    <source>
        <dbReference type="HAMAP-Rule" id="MF_00366"/>
    </source>
</evidence>
<name>RPOZ_ECOSE</name>
<sequence>MARVTVQDAVEKIGNRFDLVLVAARRARQMQVGGKDPLVPEENDKTTVIALREIEEGLINNQILDVRERQEQQEQEAAELQAVTAIAEGRR</sequence>
<accession>B6I3M8</accession>
<gene>
    <name evidence="1" type="primary">rpoZ</name>
    <name type="ordered locus">ECSE_3931</name>
</gene>
<keyword id="KW-0240">DNA-directed RNA polymerase</keyword>
<keyword id="KW-0548">Nucleotidyltransferase</keyword>
<keyword id="KW-0804">Transcription</keyword>
<keyword id="KW-0808">Transferase</keyword>
<proteinExistence type="inferred from homology"/>
<feature type="chain" id="PRO_1000121221" description="DNA-directed RNA polymerase subunit omega">
    <location>
        <begin position="1"/>
        <end position="91"/>
    </location>
</feature>
<dbReference type="EC" id="2.7.7.6" evidence="1"/>
<dbReference type="EMBL" id="AP009240">
    <property type="protein sequence ID" value="BAG79455.1"/>
    <property type="molecule type" value="Genomic_DNA"/>
</dbReference>
<dbReference type="RefSeq" id="WP_000135058.1">
    <property type="nucleotide sequence ID" value="NC_011415.1"/>
</dbReference>
<dbReference type="SMR" id="B6I3M8"/>
<dbReference type="GeneID" id="98390719"/>
<dbReference type="KEGG" id="ecy:ECSE_3931"/>
<dbReference type="HOGENOM" id="CLU_125406_5_3_6"/>
<dbReference type="Proteomes" id="UP000008199">
    <property type="component" value="Chromosome"/>
</dbReference>
<dbReference type="GO" id="GO:0000428">
    <property type="term" value="C:DNA-directed RNA polymerase complex"/>
    <property type="evidence" value="ECO:0007669"/>
    <property type="project" value="UniProtKB-KW"/>
</dbReference>
<dbReference type="GO" id="GO:0003677">
    <property type="term" value="F:DNA binding"/>
    <property type="evidence" value="ECO:0007669"/>
    <property type="project" value="UniProtKB-UniRule"/>
</dbReference>
<dbReference type="GO" id="GO:0003899">
    <property type="term" value="F:DNA-directed RNA polymerase activity"/>
    <property type="evidence" value="ECO:0007669"/>
    <property type="project" value="UniProtKB-UniRule"/>
</dbReference>
<dbReference type="GO" id="GO:0006351">
    <property type="term" value="P:DNA-templated transcription"/>
    <property type="evidence" value="ECO:0007669"/>
    <property type="project" value="UniProtKB-UniRule"/>
</dbReference>
<dbReference type="FunFam" id="3.90.940.10:FF:000001">
    <property type="entry name" value="DNA-directed RNA polymerase subunit omega"/>
    <property type="match status" value="1"/>
</dbReference>
<dbReference type="Gene3D" id="3.90.940.10">
    <property type="match status" value="1"/>
</dbReference>
<dbReference type="HAMAP" id="MF_00366">
    <property type="entry name" value="RNApol_bact_RpoZ"/>
    <property type="match status" value="1"/>
</dbReference>
<dbReference type="InterPro" id="IPR003716">
    <property type="entry name" value="DNA-dir_RNA_pol_omega"/>
</dbReference>
<dbReference type="InterPro" id="IPR006110">
    <property type="entry name" value="Pol_omega/Rpo6/RPB6"/>
</dbReference>
<dbReference type="InterPro" id="IPR036161">
    <property type="entry name" value="RPB6/omega-like_sf"/>
</dbReference>
<dbReference type="NCBIfam" id="TIGR00690">
    <property type="entry name" value="rpoZ"/>
    <property type="match status" value="1"/>
</dbReference>
<dbReference type="PANTHER" id="PTHR34476">
    <property type="entry name" value="DNA-DIRECTED RNA POLYMERASE SUBUNIT OMEGA"/>
    <property type="match status" value="1"/>
</dbReference>
<dbReference type="PANTHER" id="PTHR34476:SF1">
    <property type="entry name" value="DNA-DIRECTED RNA POLYMERASE SUBUNIT OMEGA"/>
    <property type="match status" value="1"/>
</dbReference>
<dbReference type="Pfam" id="PF01192">
    <property type="entry name" value="RNA_pol_Rpb6"/>
    <property type="match status" value="1"/>
</dbReference>
<dbReference type="SMART" id="SM01409">
    <property type="entry name" value="RNA_pol_Rpb6"/>
    <property type="match status" value="1"/>
</dbReference>
<dbReference type="SUPFAM" id="SSF63562">
    <property type="entry name" value="RPB6/omega subunit-like"/>
    <property type="match status" value="1"/>
</dbReference>
<protein>
    <recommendedName>
        <fullName evidence="1">DNA-directed RNA polymerase subunit omega</fullName>
        <shortName evidence="1">RNAP omega subunit</shortName>
        <ecNumber evidence="1">2.7.7.6</ecNumber>
    </recommendedName>
    <alternativeName>
        <fullName evidence="1">RNA polymerase omega subunit</fullName>
    </alternativeName>
    <alternativeName>
        <fullName evidence="1">Transcriptase subunit omega</fullName>
    </alternativeName>
</protein>
<reference key="1">
    <citation type="journal article" date="2008" name="DNA Res.">
        <title>Complete genome sequence and comparative analysis of the wild-type commensal Escherichia coli strain SE11 isolated from a healthy adult.</title>
        <authorList>
            <person name="Oshima K."/>
            <person name="Toh H."/>
            <person name="Ogura Y."/>
            <person name="Sasamoto H."/>
            <person name="Morita H."/>
            <person name="Park S.-H."/>
            <person name="Ooka T."/>
            <person name="Iyoda S."/>
            <person name="Taylor T.D."/>
            <person name="Hayashi T."/>
            <person name="Itoh K."/>
            <person name="Hattori M."/>
        </authorList>
    </citation>
    <scope>NUCLEOTIDE SEQUENCE [LARGE SCALE GENOMIC DNA]</scope>
    <source>
        <strain>SE11</strain>
    </source>
</reference>